<organism>
    <name type="scientific">Dehalococcoides mccartyi (strain CBDB1)</name>
    <dbReference type="NCBI Taxonomy" id="255470"/>
    <lineage>
        <taxon>Bacteria</taxon>
        <taxon>Bacillati</taxon>
        <taxon>Chloroflexota</taxon>
        <taxon>Dehalococcoidia</taxon>
        <taxon>Dehalococcoidales</taxon>
        <taxon>Dehalococcoidaceae</taxon>
        <taxon>Dehalococcoides</taxon>
    </lineage>
</organism>
<evidence type="ECO:0000255" key="1">
    <source>
        <dbReference type="HAMAP-Rule" id="MF_00211"/>
    </source>
</evidence>
<sequence length="341" mass="35748">MIKEAIGSLVLGKSLTLEQSASVMDEIMEGKTTPAQIGAFLTALRVKGETAEEIAGLANVMRAKSTRISTSTPVLDIVGIGGDGINTFNISTTAAFVISGAGIKVAKHGNRAASSMCGSADVLEALGIKIDLNAEQVKICIEQIGIGFMFAPVFHPAMKFVAPSRREIGIRTVFNILGPLTNPASAQYQLIGVPEIGLGDKIISALCHMDIKHALVVHGLDGMDEMSISGDSVIWELKDKEIIKFRHTVSPREMGLEQVSLQAVKGGAAEENALTLRAILSGAKGPKRDVVLLNAAAALMVADKIDTIAEGISLAAEIIDNGLALNKLESLIKLSQSLASG</sequence>
<protein>
    <recommendedName>
        <fullName evidence="1">Anthranilate phosphoribosyltransferase</fullName>
        <ecNumber evidence="1">2.4.2.18</ecNumber>
    </recommendedName>
</protein>
<name>TRPD_DEHMC</name>
<feature type="chain" id="PRO_0000227154" description="Anthranilate phosphoribosyltransferase">
    <location>
        <begin position="1"/>
        <end position="341"/>
    </location>
</feature>
<feature type="binding site" evidence="1">
    <location>
        <position position="79"/>
    </location>
    <ligand>
        <name>5-phospho-alpha-D-ribose 1-diphosphate</name>
        <dbReference type="ChEBI" id="CHEBI:58017"/>
    </ligand>
</feature>
<feature type="binding site" evidence="1">
    <location>
        <position position="79"/>
    </location>
    <ligand>
        <name>anthranilate</name>
        <dbReference type="ChEBI" id="CHEBI:16567"/>
        <label>1</label>
    </ligand>
</feature>
<feature type="binding site" evidence="1">
    <location>
        <begin position="82"/>
        <end position="83"/>
    </location>
    <ligand>
        <name>5-phospho-alpha-D-ribose 1-diphosphate</name>
        <dbReference type="ChEBI" id="CHEBI:58017"/>
    </ligand>
</feature>
<feature type="binding site" evidence="1">
    <location>
        <position position="87"/>
    </location>
    <ligand>
        <name>5-phospho-alpha-D-ribose 1-diphosphate</name>
        <dbReference type="ChEBI" id="CHEBI:58017"/>
    </ligand>
</feature>
<feature type="binding site" evidence="1">
    <location>
        <begin position="89"/>
        <end position="92"/>
    </location>
    <ligand>
        <name>5-phospho-alpha-D-ribose 1-diphosphate</name>
        <dbReference type="ChEBI" id="CHEBI:58017"/>
    </ligand>
</feature>
<feature type="binding site" evidence="1">
    <location>
        <position position="91"/>
    </location>
    <ligand>
        <name>Mg(2+)</name>
        <dbReference type="ChEBI" id="CHEBI:18420"/>
        <label>1</label>
    </ligand>
</feature>
<feature type="binding site" evidence="1">
    <location>
        <begin position="107"/>
        <end position="115"/>
    </location>
    <ligand>
        <name>5-phospho-alpha-D-ribose 1-diphosphate</name>
        <dbReference type="ChEBI" id="CHEBI:58017"/>
    </ligand>
</feature>
<feature type="binding site" evidence="1">
    <location>
        <position position="110"/>
    </location>
    <ligand>
        <name>anthranilate</name>
        <dbReference type="ChEBI" id="CHEBI:16567"/>
        <label>1</label>
    </ligand>
</feature>
<feature type="binding site" evidence="1">
    <location>
        <position position="119"/>
    </location>
    <ligand>
        <name>5-phospho-alpha-D-ribose 1-diphosphate</name>
        <dbReference type="ChEBI" id="CHEBI:58017"/>
    </ligand>
</feature>
<feature type="binding site" evidence="1">
    <location>
        <position position="165"/>
    </location>
    <ligand>
        <name>anthranilate</name>
        <dbReference type="ChEBI" id="CHEBI:16567"/>
        <label>2</label>
    </ligand>
</feature>
<feature type="binding site" evidence="1">
    <location>
        <position position="224"/>
    </location>
    <ligand>
        <name>Mg(2+)</name>
        <dbReference type="ChEBI" id="CHEBI:18420"/>
        <label>2</label>
    </ligand>
</feature>
<feature type="binding site" evidence="1">
    <location>
        <position position="225"/>
    </location>
    <ligand>
        <name>Mg(2+)</name>
        <dbReference type="ChEBI" id="CHEBI:18420"/>
        <label>1</label>
    </ligand>
</feature>
<feature type="binding site" evidence="1">
    <location>
        <position position="225"/>
    </location>
    <ligand>
        <name>Mg(2+)</name>
        <dbReference type="ChEBI" id="CHEBI:18420"/>
        <label>2</label>
    </ligand>
</feature>
<reference key="1">
    <citation type="journal article" date="2005" name="Nat. Biotechnol.">
        <title>Genome sequence of the chlorinated compound-respiring bacterium Dehalococcoides species strain CBDB1.</title>
        <authorList>
            <person name="Kube M."/>
            <person name="Beck A."/>
            <person name="Zinder S.H."/>
            <person name="Kuhl H."/>
            <person name="Reinhardt R."/>
            <person name="Adrian L."/>
        </authorList>
    </citation>
    <scope>NUCLEOTIDE SEQUENCE [LARGE SCALE GENOMIC DNA]</scope>
    <source>
        <strain>CBDB1</strain>
    </source>
</reference>
<gene>
    <name evidence="1" type="primary">trpD</name>
    <name type="ordered locus">cbdbA1444</name>
</gene>
<dbReference type="EC" id="2.4.2.18" evidence="1"/>
<dbReference type="EMBL" id="AJ965256">
    <property type="protein sequence ID" value="CAI83473.1"/>
    <property type="molecule type" value="Genomic_DNA"/>
</dbReference>
<dbReference type="RefSeq" id="WP_010937160.1">
    <property type="nucleotide sequence ID" value="NC_007356.1"/>
</dbReference>
<dbReference type="SMR" id="Q3ZZ15"/>
<dbReference type="GeneID" id="3229287"/>
<dbReference type="KEGG" id="deh:cbdbA1444"/>
<dbReference type="HOGENOM" id="CLU_034315_2_1_0"/>
<dbReference type="UniPathway" id="UPA00035">
    <property type="reaction ID" value="UER00041"/>
</dbReference>
<dbReference type="Proteomes" id="UP000000433">
    <property type="component" value="Chromosome"/>
</dbReference>
<dbReference type="GO" id="GO:0005829">
    <property type="term" value="C:cytosol"/>
    <property type="evidence" value="ECO:0007669"/>
    <property type="project" value="TreeGrafter"/>
</dbReference>
<dbReference type="GO" id="GO:0004048">
    <property type="term" value="F:anthranilate phosphoribosyltransferase activity"/>
    <property type="evidence" value="ECO:0007669"/>
    <property type="project" value="UniProtKB-UniRule"/>
</dbReference>
<dbReference type="GO" id="GO:0000287">
    <property type="term" value="F:magnesium ion binding"/>
    <property type="evidence" value="ECO:0007669"/>
    <property type="project" value="UniProtKB-UniRule"/>
</dbReference>
<dbReference type="GO" id="GO:0000162">
    <property type="term" value="P:L-tryptophan biosynthetic process"/>
    <property type="evidence" value="ECO:0007669"/>
    <property type="project" value="UniProtKB-UniRule"/>
</dbReference>
<dbReference type="FunFam" id="3.40.1030.10:FF:000002">
    <property type="entry name" value="Anthranilate phosphoribosyltransferase"/>
    <property type="match status" value="1"/>
</dbReference>
<dbReference type="Gene3D" id="3.40.1030.10">
    <property type="entry name" value="Nucleoside phosphorylase/phosphoribosyltransferase catalytic domain"/>
    <property type="match status" value="1"/>
</dbReference>
<dbReference type="Gene3D" id="1.20.970.10">
    <property type="entry name" value="Transferase, Pyrimidine Nucleoside Phosphorylase, Chain C"/>
    <property type="match status" value="1"/>
</dbReference>
<dbReference type="HAMAP" id="MF_00211">
    <property type="entry name" value="TrpD"/>
    <property type="match status" value="1"/>
</dbReference>
<dbReference type="InterPro" id="IPR005940">
    <property type="entry name" value="Anthranilate_Pribosyl_Tfrase"/>
</dbReference>
<dbReference type="InterPro" id="IPR000312">
    <property type="entry name" value="Glycosyl_Trfase_fam3"/>
</dbReference>
<dbReference type="InterPro" id="IPR017459">
    <property type="entry name" value="Glycosyl_Trfase_fam3_N_dom"/>
</dbReference>
<dbReference type="InterPro" id="IPR036320">
    <property type="entry name" value="Glycosyl_Trfase_fam3_N_dom_sf"/>
</dbReference>
<dbReference type="InterPro" id="IPR035902">
    <property type="entry name" value="Nuc_phospho_transferase"/>
</dbReference>
<dbReference type="NCBIfam" id="TIGR01245">
    <property type="entry name" value="trpD"/>
    <property type="match status" value="1"/>
</dbReference>
<dbReference type="PANTHER" id="PTHR43285">
    <property type="entry name" value="ANTHRANILATE PHOSPHORIBOSYLTRANSFERASE"/>
    <property type="match status" value="1"/>
</dbReference>
<dbReference type="PANTHER" id="PTHR43285:SF2">
    <property type="entry name" value="ANTHRANILATE PHOSPHORIBOSYLTRANSFERASE"/>
    <property type="match status" value="1"/>
</dbReference>
<dbReference type="Pfam" id="PF02885">
    <property type="entry name" value="Glycos_trans_3N"/>
    <property type="match status" value="1"/>
</dbReference>
<dbReference type="Pfam" id="PF00591">
    <property type="entry name" value="Glycos_transf_3"/>
    <property type="match status" value="1"/>
</dbReference>
<dbReference type="SUPFAM" id="SSF52418">
    <property type="entry name" value="Nucleoside phosphorylase/phosphoribosyltransferase catalytic domain"/>
    <property type="match status" value="1"/>
</dbReference>
<dbReference type="SUPFAM" id="SSF47648">
    <property type="entry name" value="Nucleoside phosphorylase/phosphoribosyltransferase N-terminal domain"/>
    <property type="match status" value="1"/>
</dbReference>
<comment type="function">
    <text evidence="1">Catalyzes the transfer of the phosphoribosyl group of 5-phosphorylribose-1-pyrophosphate (PRPP) to anthranilate to yield N-(5'-phosphoribosyl)-anthranilate (PRA).</text>
</comment>
<comment type="catalytic activity">
    <reaction evidence="1">
        <text>N-(5-phospho-beta-D-ribosyl)anthranilate + diphosphate = 5-phospho-alpha-D-ribose 1-diphosphate + anthranilate</text>
        <dbReference type="Rhea" id="RHEA:11768"/>
        <dbReference type="ChEBI" id="CHEBI:16567"/>
        <dbReference type="ChEBI" id="CHEBI:18277"/>
        <dbReference type="ChEBI" id="CHEBI:33019"/>
        <dbReference type="ChEBI" id="CHEBI:58017"/>
        <dbReference type="EC" id="2.4.2.18"/>
    </reaction>
</comment>
<comment type="cofactor">
    <cofactor evidence="1">
        <name>Mg(2+)</name>
        <dbReference type="ChEBI" id="CHEBI:18420"/>
    </cofactor>
    <text evidence="1">Binds 2 magnesium ions per monomer.</text>
</comment>
<comment type="pathway">
    <text evidence="1">Amino-acid biosynthesis; L-tryptophan biosynthesis; L-tryptophan from chorismate: step 2/5.</text>
</comment>
<comment type="subunit">
    <text evidence="1">Homodimer.</text>
</comment>
<comment type="similarity">
    <text evidence="1">Belongs to the anthranilate phosphoribosyltransferase family.</text>
</comment>
<proteinExistence type="inferred from homology"/>
<keyword id="KW-0028">Amino-acid biosynthesis</keyword>
<keyword id="KW-0057">Aromatic amino acid biosynthesis</keyword>
<keyword id="KW-0328">Glycosyltransferase</keyword>
<keyword id="KW-0460">Magnesium</keyword>
<keyword id="KW-0479">Metal-binding</keyword>
<keyword id="KW-0808">Transferase</keyword>
<keyword id="KW-0822">Tryptophan biosynthesis</keyword>
<accession>Q3ZZ15</accession>